<evidence type="ECO:0000250" key="1">
    <source>
        <dbReference type="UniProtKB" id="Q96XT4"/>
    </source>
</evidence>
<evidence type="ECO:0000250" key="2">
    <source>
        <dbReference type="UniProtKB" id="Q96Y68"/>
    </source>
</evidence>
<evidence type="ECO:0000269" key="3">
    <source>
    </source>
</evidence>
<evidence type="ECO:0000303" key="4">
    <source>
    </source>
</evidence>
<evidence type="ECO:0000312" key="5">
    <source>
        <dbReference type="EMBL" id="BAA80470.1"/>
    </source>
</evidence>
<evidence type="ECO:0000312" key="6">
    <source>
        <dbReference type="Proteomes" id="UP000002518"/>
    </source>
</evidence>
<proteinExistence type="evidence at protein level"/>
<dbReference type="EC" id="1.2.7.11" evidence="3"/>
<dbReference type="EMBL" id="BA000002">
    <property type="protein sequence ID" value="BAA80470.1"/>
    <property type="molecule type" value="Genomic_DNA"/>
</dbReference>
<dbReference type="PIR" id="H72626">
    <property type="entry name" value="H72626"/>
</dbReference>
<dbReference type="RefSeq" id="WP_010866394.1">
    <property type="nucleotide sequence ID" value="NC_000854.2"/>
</dbReference>
<dbReference type="SMR" id="Q9YBX8"/>
<dbReference type="STRING" id="272557.APE_1472"/>
<dbReference type="EnsemblBacteria" id="BAA80470">
    <property type="protein sequence ID" value="BAA80470"/>
    <property type="gene ID" value="APE_1472"/>
</dbReference>
<dbReference type="GeneID" id="1446037"/>
<dbReference type="KEGG" id="ape:APE_1472"/>
<dbReference type="PATRIC" id="fig|272557.25.peg.997"/>
<dbReference type="eggNOG" id="arCOG01599">
    <property type="taxonomic scope" value="Archaea"/>
</dbReference>
<dbReference type="Proteomes" id="UP000002518">
    <property type="component" value="Chromosome"/>
</dbReference>
<dbReference type="GO" id="GO:0018491">
    <property type="term" value="F:2-oxobutyrate synthase activity"/>
    <property type="evidence" value="ECO:0000314"/>
    <property type="project" value="UniProtKB"/>
</dbReference>
<dbReference type="GO" id="GO:0047553">
    <property type="term" value="F:2-oxoglutarate synthase activity"/>
    <property type="evidence" value="ECO:0000314"/>
    <property type="project" value="UniProtKB"/>
</dbReference>
<dbReference type="GO" id="GO:0051539">
    <property type="term" value="F:4 iron, 4 sulfur cluster binding"/>
    <property type="evidence" value="ECO:0000250"/>
    <property type="project" value="UniProtKB"/>
</dbReference>
<dbReference type="GO" id="GO:0000287">
    <property type="term" value="F:magnesium ion binding"/>
    <property type="evidence" value="ECO:0000250"/>
    <property type="project" value="UniProtKB"/>
</dbReference>
<dbReference type="GO" id="GO:0019164">
    <property type="term" value="F:pyruvate synthase activity"/>
    <property type="evidence" value="ECO:0000314"/>
    <property type="project" value="UniProtKB"/>
</dbReference>
<dbReference type="GO" id="GO:0030976">
    <property type="term" value="F:thiamine pyrophosphate binding"/>
    <property type="evidence" value="ECO:0000250"/>
    <property type="project" value="UniProtKB"/>
</dbReference>
<dbReference type="CDD" id="cd03375">
    <property type="entry name" value="TPP_OGFOR"/>
    <property type="match status" value="1"/>
</dbReference>
<dbReference type="FunFam" id="3.40.50.970:FF:000049">
    <property type="entry name" value="2-oxoglutarate ferredoxin oxidoreductase subunit beta"/>
    <property type="match status" value="1"/>
</dbReference>
<dbReference type="Gene3D" id="3.40.50.970">
    <property type="match status" value="1"/>
</dbReference>
<dbReference type="InterPro" id="IPR053399">
    <property type="entry name" value="2-oxoacid:Fd_oxidored_beta"/>
</dbReference>
<dbReference type="InterPro" id="IPR051457">
    <property type="entry name" value="2-oxoacid:Fd_oxidoreductase"/>
</dbReference>
<dbReference type="InterPro" id="IPR011896">
    <property type="entry name" value="OFOB"/>
</dbReference>
<dbReference type="InterPro" id="IPR032686">
    <property type="entry name" value="PFO_beta_C"/>
</dbReference>
<dbReference type="InterPro" id="IPR029061">
    <property type="entry name" value="THDP-binding"/>
</dbReference>
<dbReference type="InterPro" id="IPR011766">
    <property type="entry name" value="TPP_enzyme_TPP-bd"/>
</dbReference>
<dbReference type="NCBIfam" id="NF041171">
    <property type="entry name" value="Oxoac_fdxbeta_Archa"/>
    <property type="match status" value="1"/>
</dbReference>
<dbReference type="NCBIfam" id="TIGR02177">
    <property type="entry name" value="PorB_KorB"/>
    <property type="match status" value="1"/>
</dbReference>
<dbReference type="PANTHER" id="PTHR48084">
    <property type="entry name" value="2-OXOGLUTARATE OXIDOREDUCTASE SUBUNIT KORB-RELATED"/>
    <property type="match status" value="1"/>
</dbReference>
<dbReference type="PANTHER" id="PTHR48084:SF2">
    <property type="entry name" value="PYRUVATE FERREDOXIN_FLAVODOXIN OXIDOREDUCTASE, BETA SUBUNIT"/>
    <property type="match status" value="1"/>
</dbReference>
<dbReference type="Pfam" id="PF12367">
    <property type="entry name" value="PFO_beta_C"/>
    <property type="match status" value="1"/>
</dbReference>
<dbReference type="Pfam" id="PF02775">
    <property type="entry name" value="TPP_enzyme_C"/>
    <property type="match status" value="1"/>
</dbReference>
<dbReference type="SUPFAM" id="SSF52518">
    <property type="entry name" value="Thiamin diphosphate-binding fold (THDP-binding)"/>
    <property type="match status" value="1"/>
</dbReference>
<organism>
    <name type="scientific">Aeropyrum pernix (strain ATCC 700893 / DSM 11879 / JCM 9820 / NBRC 100138 / K1)</name>
    <dbReference type="NCBI Taxonomy" id="272557"/>
    <lineage>
        <taxon>Archaea</taxon>
        <taxon>Thermoproteota</taxon>
        <taxon>Thermoprotei</taxon>
        <taxon>Desulfurococcales</taxon>
        <taxon>Desulfurococcaceae</taxon>
        <taxon>Aeropyrum</taxon>
    </lineage>
</organism>
<keyword id="KW-0408">Iron</keyword>
<keyword id="KW-0411">Iron-sulfur</keyword>
<keyword id="KW-0460">Magnesium</keyword>
<keyword id="KW-0479">Metal-binding</keyword>
<keyword id="KW-0560">Oxidoreductase</keyword>
<keyword id="KW-1185">Reference proteome</keyword>
<keyword id="KW-0786">Thiamine pyrophosphate</keyword>
<reference key="1">
    <citation type="journal article" date="1999" name="DNA Res.">
        <title>Complete genome sequence of an aerobic hyper-thermophilic crenarchaeon, Aeropyrum pernix K1.</title>
        <authorList>
            <person name="Kawarabayasi Y."/>
            <person name="Hino Y."/>
            <person name="Horikawa H."/>
            <person name="Yamazaki S."/>
            <person name="Haikawa Y."/>
            <person name="Jin-no K."/>
            <person name="Takahashi M."/>
            <person name="Sekine M."/>
            <person name="Baba S."/>
            <person name="Ankai A."/>
            <person name="Kosugi H."/>
            <person name="Hosoyama A."/>
            <person name="Fukui S."/>
            <person name="Nagai Y."/>
            <person name="Nishijima K."/>
            <person name="Nakazawa H."/>
            <person name="Takamiya M."/>
            <person name="Masuda S."/>
            <person name="Funahashi T."/>
            <person name="Tanaka T."/>
            <person name="Kudoh Y."/>
            <person name="Yamazaki J."/>
            <person name="Kushida N."/>
            <person name="Oguchi A."/>
            <person name="Aoki K."/>
            <person name="Kubota K."/>
            <person name="Nakamura Y."/>
            <person name="Nomura N."/>
            <person name="Sako Y."/>
            <person name="Kikuchi H."/>
        </authorList>
    </citation>
    <scope>NUCLEOTIDE SEQUENCE [LARGE SCALE GENOMIC DNA]</scope>
    <source>
        <strain evidence="6">ATCC 700893 / DSM 11879 / JCM 9820 / NBRC 100138 / K1</strain>
    </source>
</reference>
<reference key="2">
    <citation type="journal article" date="2005" name="FEBS Lett.">
        <title>Gene expression and characterization of two 2-oxoacid:ferredoxin oxidoreductases from Aeropyrum pernix K1.</title>
        <authorList>
            <person name="Nishizawa Y."/>
            <person name="Yabuki T."/>
            <person name="Fukuda E."/>
            <person name="Wakagi T."/>
        </authorList>
    </citation>
    <scope>FUNCTION</scope>
    <scope>CATALYTIC ACTIVITY</scope>
    <scope>BIOPHYSICOCHEMICAL PROPERTIES</scope>
    <scope>SUBUNIT</scope>
    <scope>SUBSTRATE SPECIFICITY</scope>
    <source>
        <strain>ATCC 700893 / DSM 11879 / JCM 9820 / NBRC 100138 / K1</strain>
    </source>
</reference>
<accession>Q9YBX8</accession>
<name>OFOB2_AERPE</name>
<protein>
    <recommendedName>
        <fullName evidence="4">2-oxoacid:ferredoxin oxidoreductase 2, subunit beta</fullName>
        <shortName evidence="4">OFOR2</shortName>
        <ecNumber evidence="3">1.2.7.11</ecNumber>
    </recommendedName>
</protein>
<feature type="chain" id="PRO_0000445538" description="2-oxoacid:ferredoxin oxidoreductase 2, subunit beta">
    <location>
        <begin position="1"/>
        <end position="309"/>
    </location>
</feature>
<feature type="binding site" evidence="1">
    <location>
        <position position="17"/>
    </location>
    <ligand>
        <name>[4Fe-4S] cluster</name>
        <dbReference type="ChEBI" id="CHEBI:49883"/>
    </ligand>
</feature>
<feature type="binding site" evidence="1">
    <location>
        <position position="20"/>
    </location>
    <ligand>
        <name>[4Fe-4S] cluster</name>
        <dbReference type="ChEBI" id="CHEBI:49883"/>
    </ligand>
</feature>
<feature type="binding site" evidence="1">
    <location>
        <begin position="49"/>
        <end position="52"/>
    </location>
    <ligand>
        <name>thiamine diphosphate</name>
        <dbReference type="ChEBI" id="CHEBI:58937"/>
    </ligand>
</feature>
<feature type="binding site" evidence="1">
    <location>
        <position position="51"/>
    </location>
    <ligand>
        <name>[4Fe-4S] cluster</name>
        <dbReference type="ChEBI" id="CHEBI:49883"/>
    </ligand>
</feature>
<feature type="binding site" evidence="1">
    <location>
        <position position="68"/>
    </location>
    <ligand>
        <name>thiamine diphosphate</name>
        <dbReference type="ChEBI" id="CHEBI:58937"/>
    </ligand>
</feature>
<feature type="binding site" evidence="1">
    <location>
        <position position="93"/>
    </location>
    <ligand>
        <name>Mg(2+)</name>
        <dbReference type="ChEBI" id="CHEBI:18420"/>
    </ligand>
</feature>
<feature type="binding site" evidence="1">
    <location>
        <begin position="94"/>
        <end position="95"/>
    </location>
    <ligand>
        <name>thiamine diphosphate</name>
        <dbReference type="ChEBI" id="CHEBI:58937"/>
    </ligand>
</feature>
<feature type="binding site" evidence="1">
    <location>
        <position position="121"/>
    </location>
    <ligand>
        <name>Mg(2+)</name>
        <dbReference type="ChEBI" id="CHEBI:18420"/>
    </ligand>
</feature>
<feature type="binding site" evidence="1">
    <location>
        <position position="123"/>
    </location>
    <ligand>
        <name>Mg(2+)</name>
        <dbReference type="ChEBI" id="CHEBI:18420"/>
    </ligand>
</feature>
<feature type="binding site" evidence="1">
    <location>
        <begin position="125"/>
        <end position="126"/>
    </location>
    <ligand>
        <name>thiamine diphosphate</name>
        <dbReference type="ChEBI" id="CHEBI:58937"/>
    </ligand>
</feature>
<feature type="binding site" evidence="1">
    <location>
        <position position="200"/>
    </location>
    <ligand>
        <name>[4Fe-4S] cluster</name>
        <dbReference type="ChEBI" id="CHEBI:49883"/>
    </ligand>
</feature>
<feature type="site" description="Plays an important role in the binding of CoA" evidence="2">
    <location>
        <position position="128"/>
    </location>
</feature>
<gene>
    <name evidence="5" type="ordered locus">APE_1472</name>
</gene>
<sequence length="309" mass="34411">MARSWLDYKTQAWVQWCPGCGDFGILNSIYRAVSELGIDPENLAVVGGIGCSGRTTYYVKGSNFHALHGRAIPVATGVKLANPHLNVIVAGGDGDLMGIGGGHFVALGRRNLNITVLLFDNAVYGLTKGQAAPTLPAWVKTKALSMPNIHDNINPVLLAFAAGYTFIARGYAYHTQQLKELIKTAVRHRGAALVDILQPCPTYNNIMTNKWYEERIYYVDQEEGYDPIIRTPEEFQKKAPAIAAKLMEFGDRIPLGILYWNQTRESFEERLEKIMPGYMSAPPATRRIELEGKPFLHPFDIFKDRLVTP</sequence>
<comment type="function">
    <text evidence="3">Catalyzes the coenzyme A-dependent oxidative decarboxylation of different 2-oxoacids such as pyruvate, 2-oxobutyrate, glyoxylate and 2-oxoglutarate to form their CoA derivatives.</text>
</comment>
<comment type="catalytic activity">
    <reaction evidence="3">
        <text>a 2-oxocarboxylate + 2 oxidized [2Fe-2S]-[ferredoxin] + CoA = an acyl-CoA + 2 reduced [2Fe-2S]-[ferredoxin] + CO2 + H(+)</text>
        <dbReference type="Rhea" id="RHEA:42316"/>
        <dbReference type="Rhea" id="RHEA-COMP:10000"/>
        <dbReference type="Rhea" id="RHEA-COMP:10001"/>
        <dbReference type="ChEBI" id="CHEBI:15378"/>
        <dbReference type="ChEBI" id="CHEBI:16526"/>
        <dbReference type="ChEBI" id="CHEBI:33737"/>
        <dbReference type="ChEBI" id="CHEBI:33738"/>
        <dbReference type="ChEBI" id="CHEBI:35179"/>
        <dbReference type="ChEBI" id="CHEBI:57287"/>
        <dbReference type="ChEBI" id="CHEBI:58342"/>
        <dbReference type="EC" id="1.2.7.11"/>
    </reaction>
</comment>
<comment type="cofactor">
    <cofactor evidence="1">
        <name>[4Fe-4S] cluster</name>
        <dbReference type="ChEBI" id="CHEBI:49883"/>
    </cofactor>
    <text evidence="1">Binds 1 [4Fe-4S] cluster per subunit.</text>
</comment>
<comment type="cofactor">
    <cofactor evidence="1">
        <name>thiamine diphosphate</name>
        <dbReference type="ChEBI" id="CHEBI:58937"/>
    </cofactor>
    <text evidence="1">Binds 1 thiamine pyrophosphate per subunit.</text>
</comment>
<comment type="cofactor">
    <cofactor evidence="1">
        <name>Mg(2+)</name>
        <dbReference type="ChEBI" id="CHEBI:18420"/>
    </cofactor>
    <text evidence="1">Binds 1 Mg(2+) per subunit.</text>
</comment>
<comment type="biophysicochemical properties">
    <kinetics>
        <KM evidence="3">380 uM for pyruvate (at 80 degrees Celsius)</KM>
        <KM evidence="3">500 uM for 2-oxoglutarate (at 80 degrees Celsius)</KM>
        <Vmax evidence="3">8.0 umol/min/mg enzyme with pyruvate as substrate (at 80 degrees Celsius)</Vmax>
        <Vmax evidence="3">7.46 umol/min/mg enzyme with 2-oxoglutarate as substrate (at 80 degrees Celsius)</Vmax>
    </kinetics>
    <phDependence>
        <text evidence="3">Optimum pH is 8.5.</text>
    </phDependence>
    <temperatureDependence>
        <text evidence="3">Optimum temperature is over 110 degrees Celsius.</text>
    </temperatureDependence>
</comment>
<comment type="subunit">
    <text evidence="3">Heterodimer composed of an alpha and a beta subunit.</text>
</comment>